<comment type="function">
    <text evidence="1">Functions in the N-end rule pathway of protein degradation where it conjugates Leu, Phe and, less efficiently, Met from aminoacyl-tRNAs to the N-termini of proteins containing an N-terminal arginine or lysine.</text>
</comment>
<comment type="catalytic activity">
    <reaction evidence="1">
        <text>N-terminal L-lysyl-[protein] + L-leucyl-tRNA(Leu) = N-terminal L-leucyl-L-lysyl-[protein] + tRNA(Leu) + H(+)</text>
        <dbReference type="Rhea" id="RHEA:12340"/>
        <dbReference type="Rhea" id="RHEA-COMP:9613"/>
        <dbReference type="Rhea" id="RHEA-COMP:9622"/>
        <dbReference type="Rhea" id="RHEA-COMP:12670"/>
        <dbReference type="Rhea" id="RHEA-COMP:12671"/>
        <dbReference type="ChEBI" id="CHEBI:15378"/>
        <dbReference type="ChEBI" id="CHEBI:65249"/>
        <dbReference type="ChEBI" id="CHEBI:78442"/>
        <dbReference type="ChEBI" id="CHEBI:78494"/>
        <dbReference type="ChEBI" id="CHEBI:133043"/>
        <dbReference type="EC" id="2.3.2.6"/>
    </reaction>
</comment>
<comment type="catalytic activity">
    <reaction evidence="1">
        <text>N-terminal L-arginyl-[protein] + L-leucyl-tRNA(Leu) = N-terminal L-leucyl-L-arginyl-[protein] + tRNA(Leu) + H(+)</text>
        <dbReference type="Rhea" id="RHEA:50416"/>
        <dbReference type="Rhea" id="RHEA-COMP:9613"/>
        <dbReference type="Rhea" id="RHEA-COMP:9622"/>
        <dbReference type="Rhea" id="RHEA-COMP:12672"/>
        <dbReference type="Rhea" id="RHEA-COMP:12673"/>
        <dbReference type="ChEBI" id="CHEBI:15378"/>
        <dbReference type="ChEBI" id="CHEBI:64719"/>
        <dbReference type="ChEBI" id="CHEBI:78442"/>
        <dbReference type="ChEBI" id="CHEBI:78494"/>
        <dbReference type="ChEBI" id="CHEBI:133044"/>
        <dbReference type="EC" id="2.3.2.6"/>
    </reaction>
</comment>
<comment type="catalytic activity">
    <reaction evidence="1">
        <text>L-phenylalanyl-tRNA(Phe) + an N-terminal L-alpha-aminoacyl-[protein] = an N-terminal L-phenylalanyl-L-alpha-aminoacyl-[protein] + tRNA(Phe)</text>
        <dbReference type="Rhea" id="RHEA:43632"/>
        <dbReference type="Rhea" id="RHEA-COMP:9668"/>
        <dbReference type="Rhea" id="RHEA-COMP:9699"/>
        <dbReference type="Rhea" id="RHEA-COMP:10636"/>
        <dbReference type="Rhea" id="RHEA-COMP:10637"/>
        <dbReference type="ChEBI" id="CHEBI:78442"/>
        <dbReference type="ChEBI" id="CHEBI:78531"/>
        <dbReference type="ChEBI" id="CHEBI:78597"/>
        <dbReference type="ChEBI" id="CHEBI:83561"/>
        <dbReference type="EC" id="2.3.2.6"/>
    </reaction>
</comment>
<comment type="subcellular location">
    <subcellularLocation>
        <location evidence="1">Cytoplasm</location>
    </subcellularLocation>
</comment>
<comment type="similarity">
    <text evidence="1">Belongs to the L/F-transferase family.</text>
</comment>
<protein>
    <recommendedName>
        <fullName evidence="1">Leucyl/phenylalanyl-tRNA--protein transferase</fullName>
        <ecNumber evidence="1">2.3.2.6</ecNumber>
    </recommendedName>
    <alternativeName>
        <fullName evidence="1">L/F-transferase</fullName>
    </alternativeName>
    <alternativeName>
        <fullName evidence="1">Leucyltransferase</fullName>
    </alternativeName>
    <alternativeName>
        <fullName evidence="1">Phenyalanyltransferase</fullName>
    </alternativeName>
</protein>
<name>LFTR_ECOHS</name>
<organism>
    <name type="scientific">Escherichia coli O9:H4 (strain HS)</name>
    <dbReference type="NCBI Taxonomy" id="331112"/>
    <lineage>
        <taxon>Bacteria</taxon>
        <taxon>Pseudomonadati</taxon>
        <taxon>Pseudomonadota</taxon>
        <taxon>Gammaproteobacteria</taxon>
        <taxon>Enterobacterales</taxon>
        <taxon>Enterobacteriaceae</taxon>
        <taxon>Escherichia</taxon>
    </lineage>
</organism>
<gene>
    <name evidence="1" type="primary">aat</name>
    <name type="ordered locus">EcHS_A0989</name>
</gene>
<sequence length="234" mass="26619">MRLVQLSRHSIAFPSPEGALREPNGLLALGGDLSPARLLMAYQRGIFPWFSPGDPILWWSPDPRAVLWPESLHISRSMKRFHKRSPYRVTMNYAFGQVIEGCASDREEGTWITRGVVEAYHRLHELGHAHSIEVWREDELVGGMYGVAQGTLFCGESMFSRMENASKTALLVFCEEFIGHGGKLIDCQVLNDHTASLGACEIPRRDYLNYLNQMRLGRLPNNFWVPRCLFSPQE</sequence>
<dbReference type="EC" id="2.3.2.6" evidence="1"/>
<dbReference type="EMBL" id="CP000802">
    <property type="protein sequence ID" value="ABV05342.1"/>
    <property type="molecule type" value="Genomic_DNA"/>
</dbReference>
<dbReference type="RefSeq" id="WP_001241678.1">
    <property type="nucleotide sequence ID" value="NC_009800.1"/>
</dbReference>
<dbReference type="SMR" id="A7ZYI8"/>
<dbReference type="GeneID" id="75206174"/>
<dbReference type="KEGG" id="ecx:EcHS_A0989"/>
<dbReference type="HOGENOM" id="CLU_075045_0_0_6"/>
<dbReference type="GO" id="GO:0005737">
    <property type="term" value="C:cytoplasm"/>
    <property type="evidence" value="ECO:0007669"/>
    <property type="project" value="UniProtKB-SubCell"/>
</dbReference>
<dbReference type="GO" id="GO:0008914">
    <property type="term" value="F:leucyl-tRNA--protein transferase activity"/>
    <property type="evidence" value="ECO:0007669"/>
    <property type="project" value="UniProtKB-UniRule"/>
</dbReference>
<dbReference type="GO" id="GO:0030163">
    <property type="term" value="P:protein catabolic process"/>
    <property type="evidence" value="ECO:0007669"/>
    <property type="project" value="UniProtKB-UniRule"/>
</dbReference>
<dbReference type="FunFam" id="3.30.70.3550:FF:000001">
    <property type="entry name" value="Leucyl/phenylalanyl-tRNA--protein transferase"/>
    <property type="match status" value="1"/>
</dbReference>
<dbReference type="FunFam" id="3.40.630.70:FF:000001">
    <property type="entry name" value="Leucyl/phenylalanyl-tRNA--protein transferase"/>
    <property type="match status" value="1"/>
</dbReference>
<dbReference type="Gene3D" id="3.40.630.70">
    <property type="entry name" value="Leucyl/phenylalanyl-tRNA-protein transferase, C-terminal domain"/>
    <property type="match status" value="1"/>
</dbReference>
<dbReference type="Gene3D" id="3.30.70.3550">
    <property type="entry name" value="Leucyl/phenylalanyl-tRNA-protein transferase, N-terminal domain"/>
    <property type="match status" value="1"/>
</dbReference>
<dbReference type="HAMAP" id="MF_00688">
    <property type="entry name" value="Leu_Phe_trans"/>
    <property type="match status" value="1"/>
</dbReference>
<dbReference type="InterPro" id="IPR016181">
    <property type="entry name" value="Acyl_CoA_acyltransferase"/>
</dbReference>
<dbReference type="InterPro" id="IPR004616">
    <property type="entry name" value="Leu/Phe-tRNA_Trfase"/>
</dbReference>
<dbReference type="InterPro" id="IPR042203">
    <property type="entry name" value="Leu/Phe-tRNA_Trfase_C"/>
</dbReference>
<dbReference type="InterPro" id="IPR042221">
    <property type="entry name" value="Leu/Phe-tRNA_Trfase_N"/>
</dbReference>
<dbReference type="NCBIfam" id="TIGR00667">
    <property type="entry name" value="aat"/>
    <property type="match status" value="1"/>
</dbReference>
<dbReference type="PANTHER" id="PTHR30098">
    <property type="entry name" value="LEUCYL/PHENYLALANYL-TRNA--PROTEIN TRANSFERASE"/>
    <property type="match status" value="1"/>
</dbReference>
<dbReference type="PANTHER" id="PTHR30098:SF2">
    <property type="entry name" value="LEUCYL_PHENYLALANYL-TRNA--PROTEIN TRANSFERASE"/>
    <property type="match status" value="1"/>
</dbReference>
<dbReference type="Pfam" id="PF03588">
    <property type="entry name" value="Leu_Phe_trans"/>
    <property type="match status" value="1"/>
</dbReference>
<dbReference type="SUPFAM" id="SSF55729">
    <property type="entry name" value="Acyl-CoA N-acyltransferases (Nat)"/>
    <property type="match status" value="1"/>
</dbReference>
<keyword id="KW-0012">Acyltransferase</keyword>
<keyword id="KW-0963">Cytoplasm</keyword>
<keyword id="KW-0808">Transferase</keyword>
<evidence type="ECO:0000255" key="1">
    <source>
        <dbReference type="HAMAP-Rule" id="MF_00688"/>
    </source>
</evidence>
<proteinExistence type="inferred from homology"/>
<reference key="1">
    <citation type="journal article" date="2008" name="J. Bacteriol.">
        <title>The pangenome structure of Escherichia coli: comparative genomic analysis of E. coli commensal and pathogenic isolates.</title>
        <authorList>
            <person name="Rasko D.A."/>
            <person name="Rosovitz M.J."/>
            <person name="Myers G.S.A."/>
            <person name="Mongodin E.F."/>
            <person name="Fricke W.F."/>
            <person name="Gajer P."/>
            <person name="Crabtree J."/>
            <person name="Sebaihia M."/>
            <person name="Thomson N.R."/>
            <person name="Chaudhuri R."/>
            <person name="Henderson I.R."/>
            <person name="Sperandio V."/>
            <person name="Ravel J."/>
        </authorList>
    </citation>
    <scope>NUCLEOTIDE SEQUENCE [LARGE SCALE GENOMIC DNA]</scope>
    <source>
        <strain>HS</strain>
    </source>
</reference>
<feature type="chain" id="PRO_1000062005" description="Leucyl/phenylalanyl-tRNA--protein transferase">
    <location>
        <begin position="1"/>
        <end position="234"/>
    </location>
</feature>
<accession>A7ZYI8</accession>